<gene>
    <name type="ORF">DDB_G0274347</name>
</gene>
<sequence length="704" mass="80986">MVRKATKKTIKKVKQVEEFNDDDEIIEEIVEEIEEVVEQRDEVNDEFQEEEEELEDDDDDEDDEDEIVFTSIRTTATTTTPINQHNDKEKEKKKDKQEEYIDSDDDDDDDGDENYYLNNNNNNNNNINNNNNYNNNNYNNNNTPTEPIKTETIFYNPPIRKRNEINGTVNTVSGGKSSKNIIEKMGEQSWGDMYTPSKCLQISKQNCELQSKYYTEAQLERLSSEIRRNPSMASKSYHFLSLGLTTKINHQWIRALISMALLISLVAIIFYLPLPHLKHIIMSPTGPSIQTSKTTGEFDQFDFNNPSIATKLTAFKDNWRRFSIVGVSNFLCSNYNFNPIDYSDGGGDGGDGGNTSIPKEFSTVQELKNLKIFGSCILFGVILFVVWLFATRLAEKEIIIKSNLPLQFLHSILTLLVIPLLSMLFWSLVLLYFIQTLLIGNQVNGQEDIFYCVNHLSNSLSEISSFSPARELFLGSVGIVMRLVNYFYPLSIESLALHQSTLYDTKNVYQMKLVSFLWTIIVGSFIYHTFLISSYLYSIFHEYHPTTTTTTTTTINTTTNTTSNTSQQSNPLSKRLKSNQIDPSSFNLFSLDVKFLPSFIPEVLITQNFIIVFIWTIAASLLWIYGVPPNLHIHEGEIFFIFIALAPLIKSIYNLIIIEQKKDKINQVHNEISWKSEPEILELQRQRLEQDQLDQQQFDELIDN</sequence>
<organism>
    <name type="scientific">Dictyostelium discoideum</name>
    <name type="common">Social amoeba</name>
    <dbReference type="NCBI Taxonomy" id="44689"/>
    <lineage>
        <taxon>Eukaryota</taxon>
        <taxon>Amoebozoa</taxon>
        <taxon>Evosea</taxon>
        <taxon>Eumycetozoa</taxon>
        <taxon>Dictyostelia</taxon>
        <taxon>Dictyosteliales</taxon>
        <taxon>Dictyosteliaceae</taxon>
        <taxon>Dictyostelium</taxon>
    </lineage>
</organism>
<dbReference type="EMBL" id="AAFI02000012">
    <property type="protein sequence ID" value="EAL70066.1"/>
    <property type="molecule type" value="Genomic_DNA"/>
</dbReference>
<dbReference type="RefSeq" id="XP_643901.1">
    <property type="nucleotide sequence ID" value="XM_638809.1"/>
</dbReference>
<dbReference type="SMR" id="Q86IW5"/>
<dbReference type="FunCoup" id="Q86IW5">
    <property type="interactions" value="744"/>
</dbReference>
<dbReference type="GlyGen" id="Q86IW5">
    <property type="glycosylation" value="5 sites"/>
</dbReference>
<dbReference type="PaxDb" id="44689-DDB0167911"/>
<dbReference type="EnsemblProtists" id="EAL70066">
    <property type="protein sequence ID" value="EAL70066"/>
    <property type="gene ID" value="DDB_G0274347"/>
</dbReference>
<dbReference type="GeneID" id="8619327"/>
<dbReference type="KEGG" id="ddi:DDB_G0274347"/>
<dbReference type="dictyBase" id="DDB_G0274347"/>
<dbReference type="VEuPathDB" id="AmoebaDB:DDB_G0274347"/>
<dbReference type="eggNOG" id="KOG1000">
    <property type="taxonomic scope" value="Eukaryota"/>
</dbReference>
<dbReference type="HOGENOM" id="CLU_392033_0_0_1"/>
<dbReference type="InParanoid" id="Q86IW5"/>
<dbReference type="OMA" id="QNFIIVF"/>
<dbReference type="PRO" id="PR:Q86IW5"/>
<dbReference type="Proteomes" id="UP000002195">
    <property type="component" value="Chromosome 2"/>
</dbReference>
<dbReference type="GO" id="GO:0016020">
    <property type="term" value="C:membrane"/>
    <property type="evidence" value="ECO:0007669"/>
    <property type="project" value="UniProtKB-SubCell"/>
</dbReference>
<dbReference type="PANTHER" id="PTHR16148:SF23">
    <property type="entry name" value="B BOX-TYPE DOMAIN-CONTAINING PROTEIN-RELATED"/>
    <property type="match status" value="1"/>
</dbReference>
<dbReference type="PANTHER" id="PTHR16148">
    <property type="entry name" value="NF-KAPPA-B-REPRESSING FACTOR-RELATED"/>
    <property type="match status" value="1"/>
</dbReference>
<accession>Q86IW5</accession>
<accession>Q556A9</accession>
<keyword id="KW-0325">Glycoprotein</keyword>
<keyword id="KW-0472">Membrane</keyword>
<keyword id="KW-1185">Reference proteome</keyword>
<keyword id="KW-0812">Transmembrane</keyword>
<keyword id="KW-1133">Transmembrane helix</keyword>
<name>Y7911_DICDI</name>
<comment type="subcellular location">
    <subcellularLocation>
        <location evidence="3">Membrane</location>
        <topology evidence="3">Multi-pass membrane protein</topology>
    </subcellularLocation>
</comment>
<reference key="1">
    <citation type="journal article" date="2002" name="Nature">
        <title>Sequence and analysis of chromosome 2 of Dictyostelium discoideum.</title>
        <authorList>
            <person name="Gloeckner G."/>
            <person name="Eichinger L."/>
            <person name="Szafranski K."/>
            <person name="Pachebat J.A."/>
            <person name="Bankier A.T."/>
            <person name="Dear P.H."/>
            <person name="Lehmann R."/>
            <person name="Baumgart C."/>
            <person name="Parra G."/>
            <person name="Abril J.F."/>
            <person name="Guigo R."/>
            <person name="Kumpf K."/>
            <person name="Tunggal B."/>
            <person name="Cox E.C."/>
            <person name="Quail M.A."/>
            <person name="Platzer M."/>
            <person name="Rosenthal A."/>
            <person name="Noegel A.A."/>
        </authorList>
    </citation>
    <scope>NUCLEOTIDE SEQUENCE [LARGE SCALE GENOMIC DNA]</scope>
    <source>
        <strain>AX4</strain>
    </source>
</reference>
<reference key="2">
    <citation type="journal article" date="2005" name="Nature">
        <title>The genome of the social amoeba Dictyostelium discoideum.</title>
        <authorList>
            <person name="Eichinger L."/>
            <person name="Pachebat J.A."/>
            <person name="Gloeckner G."/>
            <person name="Rajandream M.A."/>
            <person name="Sucgang R."/>
            <person name="Berriman M."/>
            <person name="Song J."/>
            <person name="Olsen R."/>
            <person name="Szafranski K."/>
            <person name="Xu Q."/>
            <person name="Tunggal B."/>
            <person name="Kummerfeld S."/>
            <person name="Madera M."/>
            <person name="Konfortov B.A."/>
            <person name="Rivero F."/>
            <person name="Bankier A.T."/>
            <person name="Lehmann R."/>
            <person name="Hamlin N."/>
            <person name="Davies R."/>
            <person name="Gaudet P."/>
            <person name="Fey P."/>
            <person name="Pilcher K."/>
            <person name="Chen G."/>
            <person name="Saunders D."/>
            <person name="Sodergren E.J."/>
            <person name="Davis P."/>
            <person name="Kerhornou A."/>
            <person name="Nie X."/>
            <person name="Hall N."/>
            <person name="Anjard C."/>
            <person name="Hemphill L."/>
            <person name="Bason N."/>
            <person name="Farbrother P."/>
            <person name="Desany B."/>
            <person name="Just E."/>
            <person name="Morio T."/>
            <person name="Rost R."/>
            <person name="Churcher C.M."/>
            <person name="Cooper J."/>
            <person name="Haydock S."/>
            <person name="van Driessche N."/>
            <person name="Cronin A."/>
            <person name="Goodhead I."/>
            <person name="Muzny D.M."/>
            <person name="Mourier T."/>
            <person name="Pain A."/>
            <person name="Lu M."/>
            <person name="Harper D."/>
            <person name="Lindsay R."/>
            <person name="Hauser H."/>
            <person name="James K.D."/>
            <person name="Quiles M."/>
            <person name="Madan Babu M."/>
            <person name="Saito T."/>
            <person name="Buchrieser C."/>
            <person name="Wardroper A."/>
            <person name="Felder M."/>
            <person name="Thangavelu M."/>
            <person name="Johnson D."/>
            <person name="Knights A."/>
            <person name="Loulseged H."/>
            <person name="Mungall K.L."/>
            <person name="Oliver K."/>
            <person name="Price C."/>
            <person name="Quail M.A."/>
            <person name="Urushihara H."/>
            <person name="Hernandez J."/>
            <person name="Rabbinowitsch E."/>
            <person name="Steffen D."/>
            <person name="Sanders M."/>
            <person name="Ma J."/>
            <person name="Kohara Y."/>
            <person name="Sharp S."/>
            <person name="Simmonds M.N."/>
            <person name="Spiegler S."/>
            <person name="Tivey A."/>
            <person name="Sugano S."/>
            <person name="White B."/>
            <person name="Walker D."/>
            <person name="Woodward J.R."/>
            <person name="Winckler T."/>
            <person name="Tanaka Y."/>
            <person name="Shaulsky G."/>
            <person name="Schleicher M."/>
            <person name="Weinstock G.M."/>
            <person name="Rosenthal A."/>
            <person name="Cox E.C."/>
            <person name="Chisholm R.L."/>
            <person name="Gibbs R.A."/>
            <person name="Loomis W.F."/>
            <person name="Platzer M."/>
            <person name="Kay R.R."/>
            <person name="Williams J.G."/>
            <person name="Dear P.H."/>
            <person name="Noegel A.A."/>
            <person name="Barrell B.G."/>
            <person name="Kuspa A."/>
        </authorList>
    </citation>
    <scope>NUCLEOTIDE SEQUENCE [LARGE SCALE GENOMIC DNA]</scope>
    <source>
        <strain>AX4</strain>
    </source>
</reference>
<evidence type="ECO:0000255" key="1"/>
<evidence type="ECO:0000256" key="2">
    <source>
        <dbReference type="SAM" id="MobiDB-lite"/>
    </source>
</evidence>
<evidence type="ECO:0000305" key="3"/>
<proteinExistence type="predicted"/>
<protein>
    <recommendedName>
        <fullName>Transmembrane protein DDB_G0274347</fullName>
    </recommendedName>
</protein>
<feature type="chain" id="PRO_0000348147" description="Transmembrane protein DDB_G0274347">
    <location>
        <begin position="1"/>
        <end position="704"/>
    </location>
</feature>
<feature type="transmembrane region" description="Helical" evidence="1">
    <location>
        <begin position="255"/>
        <end position="275"/>
    </location>
</feature>
<feature type="transmembrane region" description="Helical" evidence="1">
    <location>
        <begin position="370"/>
        <end position="390"/>
    </location>
</feature>
<feature type="transmembrane region" description="Helical" evidence="1">
    <location>
        <begin position="414"/>
        <end position="434"/>
    </location>
</feature>
<feature type="transmembrane region" description="Helical" evidence="1">
    <location>
        <begin position="513"/>
        <end position="533"/>
    </location>
</feature>
<feature type="transmembrane region" description="Helical" evidence="1">
    <location>
        <begin position="609"/>
        <end position="629"/>
    </location>
</feature>
<feature type="transmembrane region" description="Helical" evidence="1">
    <location>
        <begin position="638"/>
        <end position="658"/>
    </location>
</feature>
<feature type="region of interest" description="Disordered" evidence="2">
    <location>
        <begin position="37"/>
        <end position="145"/>
    </location>
</feature>
<feature type="region of interest" description="Disordered" evidence="2">
    <location>
        <begin position="550"/>
        <end position="576"/>
    </location>
</feature>
<feature type="compositionally biased region" description="Acidic residues" evidence="2">
    <location>
        <begin position="43"/>
        <end position="67"/>
    </location>
</feature>
<feature type="compositionally biased region" description="Basic and acidic residues" evidence="2">
    <location>
        <begin position="85"/>
        <end position="99"/>
    </location>
</feature>
<feature type="compositionally biased region" description="Acidic residues" evidence="2">
    <location>
        <begin position="100"/>
        <end position="113"/>
    </location>
</feature>
<feature type="compositionally biased region" description="Low complexity" evidence="2">
    <location>
        <begin position="114"/>
        <end position="142"/>
    </location>
</feature>
<feature type="compositionally biased region" description="Low complexity" evidence="2">
    <location>
        <begin position="550"/>
        <end position="565"/>
    </location>
</feature>
<feature type="compositionally biased region" description="Polar residues" evidence="2">
    <location>
        <begin position="566"/>
        <end position="576"/>
    </location>
</feature>
<feature type="glycosylation site" description="N-linked (GlcNAc...) asparagine" evidence="1">
    <location>
        <position position="166"/>
    </location>
</feature>
<feature type="glycosylation site" description="N-linked (GlcNAc...) asparagine" evidence="1">
    <location>
        <position position="354"/>
    </location>
</feature>
<feature type="glycosylation site" description="N-linked (GlcNAc...) asparagine" evidence="1">
    <location>
        <position position="556"/>
    </location>
</feature>
<feature type="glycosylation site" description="N-linked (GlcNAc...) asparagine" evidence="1">
    <location>
        <position position="560"/>
    </location>
</feature>
<feature type="glycosylation site" description="N-linked (GlcNAc...) asparagine" evidence="1">
    <location>
        <position position="564"/>
    </location>
</feature>